<protein>
    <recommendedName>
        <fullName evidence="1">Ribosome-binding factor A</fullName>
    </recommendedName>
</protein>
<reference key="1">
    <citation type="journal article" date="2003" name="Proc. Natl. Acad. Sci. U.S.A.">
        <title>Complete genome sequence of the Q-fever pathogen, Coxiella burnetii.</title>
        <authorList>
            <person name="Seshadri R."/>
            <person name="Paulsen I.T."/>
            <person name="Eisen J.A."/>
            <person name="Read T.D."/>
            <person name="Nelson K.E."/>
            <person name="Nelson W.C."/>
            <person name="Ward N.L."/>
            <person name="Tettelin H."/>
            <person name="Davidsen T.M."/>
            <person name="Beanan M.J."/>
            <person name="DeBoy R.T."/>
            <person name="Daugherty S.C."/>
            <person name="Brinkac L.M."/>
            <person name="Madupu R."/>
            <person name="Dodson R.J."/>
            <person name="Khouri H.M."/>
            <person name="Lee K.H."/>
            <person name="Carty H.A."/>
            <person name="Scanlan D."/>
            <person name="Heinzen R.A."/>
            <person name="Thompson H.A."/>
            <person name="Samuel J.E."/>
            <person name="Fraser C.M."/>
            <person name="Heidelberg J.F."/>
        </authorList>
    </citation>
    <scope>NUCLEOTIDE SEQUENCE [LARGE SCALE GENOMIC DNA]</scope>
    <source>
        <strain>RSA 493 / Nine Mile phase I</strain>
    </source>
</reference>
<gene>
    <name evidence="1" type="primary">rbfA</name>
    <name type="ordered locus">CBU_1431</name>
</gene>
<organism>
    <name type="scientific">Coxiella burnetii (strain RSA 493 / Nine Mile phase I)</name>
    <dbReference type="NCBI Taxonomy" id="227377"/>
    <lineage>
        <taxon>Bacteria</taxon>
        <taxon>Pseudomonadati</taxon>
        <taxon>Pseudomonadota</taxon>
        <taxon>Gammaproteobacteria</taxon>
        <taxon>Legionellales</taxon>
        <taxon>Coxiellaceae</taxon>
        <taxon>Coxiella</taxon>
    </lineage>
</organism>
<feature type="chain" id="PRO_0000102655" description="Ribosome-binding factor A">
    <location>
        <begin position="1"/>
        <end position="119"/>
    </location>
</feature>
<sequence length="119" mass="13735">MSQRQQRVADLIHQQLAELLKKEVRDSRLSKISLTAVSISPDLKQAKVFYSLLENQNEKEVQKALNKATGYLRHLLAQATVLRYVPKLEFVYDESIERAHRISLLIERALKKDDSDESS</sequence>
<comment type="function">
    <text evidence="1">One of several proteins that assist in the late maturation steps of the functional core of the 30S ribosomal subunit. Associates with free 30S ribosomal subunits (but not with 30S subunits that are part of 70S ribosomes or polysomes). Required for efficient processing of 16S rRNA. May interact with the 5'-terminal helix region of 16S rRNA.</text>
</comment>
<comment type="subunit">
    <text evidence="1">Monomer. Binds 30S ribosomal subunits, but not 50S ribosomal subunits or 70S ribosomes.</text>
</comment>
<comment type="subcellular location">
    <subcellularLocation>
        <location evidence="1">Cytoplasm</location>
    </subcellularLocation>
</comment>
<comment type="similarity">
    <text evidence="1">Belongs to the RbfA family.</text>
</comment>
<name>RBFA_COXBU</name>
<keyword id="KW-0963">Cytoplasm</keyword>
<keyword id="KW-1185">Reference proteome</keyword>
<keyword id="KW-0690">Ribosome biogenesis</keyword>
<dbReference type="EMBL" id="AE016828">
    <property type="protein sequence ID" value="AAO90928.1"/>
    <property type="molecule type" value="Genomic_DNA"/>
</dbReference>
<dbReference type="RefSeq" id="NP_820414.1">
    <property type="nucleotide sequence ID" value="NC_002971.4"/>
</dbReference>
<dbReference type="RefSeq" id="WP_005769039.1">
    <property type="nucleotide sequence ID" value="NZ_CDBG01000001.1"/>
</dbReference>
<dbReference type="SMR" id="Q83BS2"/>
<dbReference type="STRING" id="227377.CBU_1431"/>
<dbReference type="DNASU" id="1209337"/>
<dbReference type="EnsemblBacteria" id="AAO90928">
    <property type="protein sequence ID" value="AAO90928"/>
    <property type="gene ID" value="CBU_1431"/>
</dbReference>
<dbReference type="GeneID" id="1209337"/>
<dbReference type="KEGG" id="cbu:CBU_1431"/>
<dbReference type="PATRIC" id="fig|227377.7.peg.1430"/>
<dbReference type="eggNOG" id="COG0858">
    <property type="taxonomic scope" value="Bacteria"/>
</dbReference>
<dbReference type="HOGENOM" id="CLU_089475_5_1_6"/>
<dbReference type="OrthoDB" id="307788at2"/>
<dbReference type="Proteomes" id="UP000002671">
    <property type="component" value="Chromosome"/>
</dbReference>
<dbReference type="GO" id="GO:0005829">
    <property type="term" value="C:cytosol"/>
    <property type="evidence" value="ECO:0000318"/>
    <property type="project" value="GO_Central"/>
</dbReference>
<dbReference type="GO" id="GO:0043024">
    <property type="term" value="F:ribosomal small subunit binding"/>
    <property type="evidence" value="ECO:0000318"/>
    <property type="project" value="GO_Central"/>
</dbReference>
<dbReference type="GO" id="GO:0030490">
    <property type="term" value="P:maturation of SSU-rRNA"/>
    <property type="evidence" value="ECO:0007669"/>
    <property type="project" value="UniProtKB-UniRule"/>
</dbReference>
<dbReference type="GO" id="GO:0042254">
    <property type="term" value="P:ribosome biogenesis"/>
    <property type="evidence" value="ECO:0000318"/>
    <property type="project" value="GO_Central"/>
</dbReference>
<dbReference type="Gene3D" id="3.30.300.20">
    <property type="match status" value="1"/>
</dbReference>
<dbReference type="HAMAP" id="MF_00003">
    <property type="entry name" value="RbfA"/>
    <property type="match status" value="1"/>
</dbReference>
<dbReference type="InterPro" id="IPR015946">
    <property type="entry name" value="KH_dom-like_a/b"/>
</dbReference>
<dbReference type="InterPro" id="IPR000238">
    <property type="entry name" value="RbfA"/>
</dbReference>
<dbReference type="InterPro" id="IPR023799">
    <property type="entry name" value="RbfA_dom_sf"/>
</dbReference>
<dbReference type="InterPro" id="IPR020053">
    <property type="entry name" value="Ribosome-bd_factorA_CS"/>
</dbReference>
<dbReference type="NCBIfam" id="NF010390">
    <property type="entry name" value="PRK13817.1"/>
    <property type="match status" value="1"/>
</dbReference>
<dbReference type="NCBIfam" id="TIGR00082">
    <property type="entry name" value="rbfA"/>
    <property type="match status" value="1"/>
</dbReference>
<dbReference type="PANTHER" id="PTHR33515">
    <property type="entry name" value="RIBOSOME-BINDING FACTOR A, CHLOROPLASTIC-RELATED"/>
    <property type="match status" value="1"/>
</dbReference>
<dbReference type="PANTHER" id="PTHR33515:SF1">
    <property type="entry name" value="RIBOSOME-BINDING FACTOR A, CHLOROPLASTIC-RELATED"/>
    <property type="match status" value="1"/>
</dbReference>
<dbReference type="Pfam" id="PF02033">
    <property type="entry name" value="RBFA"/>
    <property type="match status" value="1"/>
</dbReference>
<dbReference type="SUPFAM" id="SSF89919">
    <property type="entry name" value="Ribosome-binding factor A, RbfA"/>
    <property type="match status" value="1"/>
</dbReference>
<dbReference type="PROSITE" id="PS01319">
    <property type="entry name" value="RBFA"/>
    <property type="match status" value="1"/>
</dbReference>
<proteinExistence type="inferred from homology"/>
<accession>Q83BS2</accession>
<evidence type="ECO:0000255" key="1">
    <source>
        <dbReference type="HAMAP-Rule" id="MF_00003"/>
    </source>
</evidence>